<dbReference type="EMBL" id="L22013">
    <property type="protein sequence ID" value="AAC37854.1"/>
    <property type="molecule type" value="Genomic_DNA"/>
</dbReference>
<dbReference type="KEGG" id="vg:932403"/>
<protein>
    <recommendedName>
        <fullName>Uncharacterized protein C17</fullName>
    </recommendedName>
</protein>
<organism>
    <name type="scientific">Swinepox virus (strain Kasza)</name>
    <name type="common">SWPV</name>
    <dbReference type="NCBI Taxonomy" id="10277"/>
    <lineage>
        <taxon>Viruses</taxon>
        <taxon>Varidnaviria</taxon>
        <taxon>Bamfordvirae</taxon>
        <taxon>Nucleocytoviricota</taxon>
        <taxon>Pokkesviricetes</taxon>
        <taxon>Chitovirales</taxon>
        <taxon>Poxviridae</taxon>
        <taxon>Chordopoxvirinae</taxon>
        <taxon>Suipoxvirus</taxon>
        <taxon>Swinepox virus</taxon>
    </lineage>
</organism>
<name>VC17_SWPVK</name>
<organismHost>
    <name type="scientific">Sus scrofa</name>
    <name type="common">Pig</name>
    <dbReference type="NCBI Taxonomy" id="9823"/>
</organismHost>
<proteinExistence type="predicted"/>
<reference key="1">
    <citation type="journal article" date="1993" name="Virology">
        <title>DNA sequence analysis of conserved and unique regions of swinepox virus: identification of genetic elements supporting phenotypic observations including a novel G protein-coupled receptor homologue.</title>
        <authorList>
            <person name="Massung R.F."/>
            <person name="Jayarama V."/>
            <person name="Moyer R.W."/>
        </authorList>
    </citation>
    <scope>NUCLEOTIDE SEQUENCE [GENOMIC DNA]</scope>
</reference>
<feature type="chain" id="PRO_0000099757" description="Uncharacterized protein C17">
    <location>
        <begin position="1"/>
        <end position="70"/>
    </location>
</feature>
<accession>P32218</accession>
<gene>
    <name type="ORF">C17L</name>
</gene>
<sequence>MGSCVSVKSISISMDTVSISSIDDEYYYNIKNKPIYVRRKNSCSSTLESRYSTYSLESRYSTYSIKSVYF</sequence>